<protein>
    <recommendedName>
        <fullName evidence="1">NAD(P)H-quinone oxidoreductase subunit 3, chloroplastic</fullName>
        <ecNumber evidence="1">7.1.1.-</ecNumber>
    </recommendedName>
    <alternativeName>
        <fullName evidence="1">NAD(P)H dehydrogenase subunit 3</fullName>
    </alternativeName>
    <alternativeName>
        <fullName evidence="1">NADH-plastoquinone oxidoreductase subunit 3</fullName>
    </alternativeName>
</protein>
<comment type="function">
    <text evidence="1">NDH shuttles electrons from NAD(P)H:plastoquinone, via FMN and iron-sulfur (Fe-S) centers, to quinones in the photosynthetic chain and possibly in a chloroplast respiratory chain. The immediate electron acceptor for the enzyme in this species is believed to be plastoquinone. Couples the redox reaction to proton translocation, and thus conserves the redox energy in a proton gradient.</text>
</comment>
<comment type="catalytic activity">
    <reaction evidence="1">
        <text>a plastoquinone + NADH + (n+1) H(+)(in) = a plastoquinol + NAD(+) + n H(+)(out)</text>
        <dbReference type="Rhea" id="RHEA:42608"/>
        <dbReference type="Rhea" id="RHEA-COMP:9561"/>
        <dbReference type="Rhea" id="RHEA-COMP:9562"/>
        <dbReference type="ChEBI" id="CHEBI:15378"/>
        <dbReference type="ChEBI" id="CHEBI:17757"/>
        <dbReference type="ChEBI" id="CHEBI:57540"/>
        <dbReference type="ChEBI" id="CHEBI:57945"/>
        <dbReference type="ChEBI" id="CHEBI:62192"/>
    </reaction>
</comment>
<comment type="catalytic activity">
    <reaction evidence="1">
        <text>a plastoquinone + NADPH + (n+1) H(+)(in) = a plastoquinol + NADP(+) + n H(+)(out)</text>
        <dbReference type="Rhea" id="RHEA:42612"/>
        <dbReference type="Rhea" id="RHEA-COMP:9561"/>
        <dbReference type="Rhea" id="RHEA-COMP:9562"/>
        <dbReference type="ChEBI" id="CHEBI:15378"/>
        <dbReference type="ChEBI" id="CHEBI:17757"/>
        <dbReference type="ChEBI" id="CHEBI:57783"/>
        <dbReference type="ChEBI" id="CHEBI:58349"/>
        <dbReference type="ChEBI" id="CHEBI:62192"/>
    </reaction>
</comment>
<comment type="subunit">
    <text evidence="1">NDH is composed of at least 16 different subunits, 5 of which are encoded in the nucleus.</text>
</comment>
<comment type="subcellular location">
    <subcellularLocation>
        <location evidence="1">Plastid</location>
        <location evidence="1">Chloroplast thylakoid membrane</location>
        <topology evidence="1">Multi-pass membrane protein</topology>
    </subcellularLocation>
</comment>
<comment type="similarity">
    <text evidence="1">Belongs to the complex I subunit 3 family.</text>
</comment>
<geneLocation type="chloroplast"/>
<proteinExistence type="inferred from homology"/>
<accession>Q06GQ5</accession>
<evidence type="ECO:0000255" key="1">
    <source>
        <dbReference type="HAMAP-Rule" id="MF_01394"/>
    </source>
</evidence>
<reference key="1">
    <citation type="journal article" date="2006" name="BMC Evol. Biol.">
        <title>Complete plastid genome sequences of Drimys, Liriodendron, and Piper: implications for the phylogenetic relationships of magnoliids.</title>
        <authorList>
            <person name="Cai Z."/>
            <person name="Penaflor C."/>
            <person name="Kuehl J.V."/>
            <person name="Leebens-Mack J."/>
            <person name="Carlson J.E."/>
            <person name="dePamphilis C.W."/>
            <person name="Boore J.L."/>
            <person name="Jansen R.K."/>
        </authorList>
    </citation>
    <scope>NUCLEOTIDE SEQUENCE [LARGE SCALE GENOMIC DNA]</scope>
</reference>
<keyword id="KW-0150">Chloroplast</keyword>
<keyword id="KW-0472">Membrane</keyword>
<keyword id="KW-0520">NAD</keyword>
<keyword id="KW-0521">NADP</keyword>
<keyword id="KW-0934">Plastid</keyword>
<keyword id="KW-0618">Plastoquinone</keyword>
<keyword id="KW-0874">Quinone</keyword>
<keyword id="KW-0793">Thylakoid</keyword>
<keyword id="KW-1278">Translocase</keyword>
<keyword id="KW-0812">Transmembrane</keyword>
<keyword id="KW-1133">Transmembrane helix</keyword>
<keyword id="KW-0813">Transport</keyword>
<dbReference type="EC" id="7.1.1.-" evidence="1"/>
<dbReference type="EMBL" id="DQ887677">
    <property type="protein sequence ID" value="ABI14477.1"/>
    <property type="molecule type" value="Genomic_DNA"/>
</dbReference>
<dbReference type="RefSeq" id="YP_784478.1">
    <property type="nucleotide sequence ID" value="NC_008457.1"/>
</dbReference>
<dbReference type="SMR" id="Q06GQ5"/>
<dbReference type="GeneID" id="4363748"/>
<dbReference type="GO" id="GO:0009535">
    <property type="term" value="C:chloroplast thylakoid membrane"/>
    <property type="evidence" value="ECO:0007669"/>
    <property type="project" value="UniProtKB-SubCell"/>
</dbReference>
<dbReference type="GO" id="GO:0030964">
    <property type="term" value="C:NADH dehydrogenase complex"/>
    <property type="evidence" value="ECO:0007669"/>
    <property type="project" value="TreeGrafter"/>
</dbReference>
<dbReference type="GO" id="GO:0008137">
    <property type="term" value="F:NADH dehydrogenase (ubiquinone) activity"/>
    <property type="evidence" value="ECO:0007669"/>
    <property type="project" value="InterPro"/>
</dbReference>
<dbReference type="GO" id="GO:0048038">
    <property type="term" value="F:quinone binding"/>
    <property type="evidence" value="ECO:0007669"/>
    <property type="project" value="UniProtKB-KW"/>
</dbReference>
<dbReference type="GO" id="GO:0019684">
    <property type="term" value="P:photosynthesis, light reaction"/>
    <property type="evidence" value="ECO:0007669"/>
    <property type="project" value="UniProtKB-UniRule"/>
</dbReference>
<dbReference type="FunFam" id="1.20.58.1610:FF:000001">
    <property type="entry name" value="NAD(P)H-quinone oxidoreductase subunit 3, chloroplastic"/>
    <property type="match status" value="1"/>
</dbReference>
<dbReference type="Gene3D" id="1.20.58.1610">
    <property type="entry name" value="NADH:ubiquinone/plastoquinone oxidoreductase, chain 3"/>
    <property type="match status" value="1"/>
</dbReference>
<dbReference type="HAMAP" id="MF_01394">
    <property type="entry name" value="NDH1_NuoA"/>
    <property type="match status" value="1"/>
</dbReference>
<dbReference type="InterPro" id="IPR023043">
    <property type="entry name" value="NAD(P)H_OxRDtase_bac/plastid"/>
</dbReference>
<dbReference type="InterPro" id="IPR000440">
    <property type="entry name" value="NADH_UbQ/plastoQ_OxRdtase_su3"/>
</dbReference>
<dbReference type="InterPro" id="IPR038430">
    <property type="entry name" value="NDAH_ubi_oxred_su3_sf"/>
</dbReference>
<dbReference type="PANTHER" id="PTHR11058">
    <property type="entry name" value="NADH-UBIQUINONE OXIDOREDUCTASE CHAIN 3"/>
    <property type="match status" value="1"/>
</dbReference>
<dbReference type="PANTHER" id="PTHR11058:SF9">
    <property type="entry name" value="NADH-UBIQUINONE OXIDOREDUCTASE CHAIN 3"/>
    <property type="match status" value="1"/>
</dbReference>
<dbReference type="Pfam" id="PF00507">
    <property type="entry name" value="Oxidored_q4"/>
    <property type="match status" value="1"/>
</dbReference>
<feature type="chain" id="PRO_0000362866" description="NAD(P)H-quinone oxidoreductase subunit 3, chloroplastic">
    <location>
        <begin position="1"/>
        <end position="120"/>
    </location>
</feature>
<feature type="transmembrane region" description="Helical" evidence="1">
    <location>
        <begin position="9"/>
        <end position="29"/>
    </location>
</feature>
<feature type="transmembrane region" description="Helical" evidence="1">
    <location>
        <begin position="64"/>
        <end position="84"/>
    </location>
</feature>
<feature type="transmembrane region" description="Helical" evidence="1">
    <location>
        <begin position="88"/>
        <end position="108"/>
    </location>
</feature>
<name>NU3C_PIPCE</name>
<sequence>MFLLHEYDIFWTFLIISSVIPILAFLISGVLAPINEGPEKLSSYESGIEPMGDAWVQFRIRYYMFALVFVVFDVETVFLYPWAMSFDVLGVSVFIEAFIFVLIPIVGSVYAWRKGALEWS</sequence>
<gene>
    <name evidence="1" type="primary">ndhC</name>
</gene>
<organism>
    <name type="scientific">Piper cenocladum</name>
    <name type="common">Ant piper</name>
    <dbReference type="NCBI Taxonomy" id="398741"/>
    <lineage>
        <taxon>Eukaryota</taxon>
        <taxon>Viridiplantae</taxon>
        <taxon>Streptophyta</taxon>
        <taxon>Embryophyta</taxon>
        <taxon>Tracheophyta</taxon>
        <taxon>Spermatophyta</taxon>
        <taxon>Magnoliopsida</taxon>
        <taxon>Magnoliidae</taxon>
        <taxon>Piperales</taxon>
        <taxon>Piperaceae</taxon>
        <taxon>Piper</taxon>
    </lineage>
</organism>